<keyword id="KW-0066">ATP synthesis</keyword>
<keyword id="KW-0067">ATP-binding</keyword>
<keyword id="KW-1003">Cell membrane</keyword>
<keyword id="KW-0139">CF(1)</keyword>
<keyword id="KW-0375">Hydrogen ion transport</keyword>
<keyword id="KW-0406">Ion transport</keyword>
<keyword id="KW-0472">Membrane</keyword>
<keyword id="KW-0547">Nucleotide-binding</keyword>
<keyword id="KW-1278">Translocase</keyword>
<keyword id="KW-0813">Transport</keyword>
<accession>P63680</accession>
<accession>Q99SF5</accession>
<reference key="1">
    <citation type="journal article" date="2002" name="Lancet">
        <title>Genome and virulence determinants of high virulence community-acquired MRSA.</title>
        <authorList>
            <person name="Baba T."/>
            <person name="Takeuchi F."/>
            <person name="Kuroda M."/>
            <person name="Yuzawa H."/>
            <person name="Aoki K."/>
            <person name="Oguchi A."/>
            <person name="Nagai Y."/>
            <person name="Iwama N."/>
            <person name="Asano K."/>
            <person name="Naimi T."/>
            <person name="Kuroda H."/>
            <person name="Cui L."/>
            <person name="Yamamoto K."/>
            <person name="Hiramatsu K."/>
        </authorList>
    </citation>
    <scope>NUCLEOTIDE SEQUENCE [LARGE SCALE GENOMIC DNA]</scope>
    <source>
        <strain>MW2</strain>
    </source>
</reference>
<name>ATPB_STAAW</name>
<gene>
    <name evidence="1" type="primary">atpD</name>
    <name type="ordered locus">MW2027</name>
</gene>
<protein>
    <recommendedName>
        <fullName evidence="1">ATP synthase subunit beta</fullName>
        <ecNumber evidence="1">7.1.2.2</ecNumber>
    </recommendedName>
    <alternativeName>
        <fullName evidence="1">ATP synthase F1 sector subunit beta</fullName>
    </alternativeName>
    <alternativeName>
        <fullName evidence="1">F-ATPase subunit beta</fullName>
    </alternativeName>
</protein>
<comment type="function">
    <text evidence="1">Produces ATP from ADP in the presence of a proton gradient across the membrane. The catalytic sites are hosted primarily by the beta subunits.</text>
</comment>
<comment type="catalytic activity">
    <reaction evidence="1">
        <text>ATP + H2O + 4 H(+)(in) = ADP + phosphate + 5 H(+)(out)</text>
        <dbReference type="Rhea" id="RHEA:57720"/>
        <dbReference type="ChEBI" id="CHEBI:15377"/>
        <dbReference type="ChEBI" id="CHEBI:15378"/>
        <dbReference type="ChEBI" id="CHEBI:30616"/>
        <dbReference type="ChEBI" id="CHEBI:43474"/>
        <dbReference type="ChEBI" id="CHEBI:456216"/>
        <dbReference type="EC" id="7.1.2.2"/>
    </reaction>
</comment>
<comment type="subunit">
    <text evidence="1">F-type ATPases have 2 components, CF(1) - the catalytic core - and CF(0) - the membrane proton channel. CF(1) has five subunits: alpha(3), beta(3), gamma(1), delta(1), epsilon(1). CF(0) has three main subunits: a(1), b(2) and c(9-12). The alpha and beta chains form an alternating ring which encloses part of the gamma chain. CF(1) is attached to CF(0) by a central stalk formed by the gamma and epsilon chains, while a peripheral stalk is formed by the delta and b chains.</text>
</comment>
<comment type="subcellular location">
    <subcellularLocation>
        <location evidence="1">Cell membrane</location>
        <topology evidence="1">Peripheral membrane protein</topology>
    </subcellularLocation>
</comment>
<comment type="similarity">
    <text evidence="1">Belongs to the ATPase alpha/beta chains family.</text>
</comment>
<feature type="chain" id="PRO_0000144473" description="ATP synthase subunit beta">
    <location>
        <begin position="1"/>
        <end position="470"/>
    </location>
</feature>
<feature type="binding site" evidence="1">
    <location>
        <begin position="155"/>
        <end position="162"/>
    </location>
    <ligand>
        <name>ATP</name>
        <dbReference type="ChEBI" id="CHEBI:30616"/>
    </ligand>
</feature>
<proteinExistence type="inferred from homology"/>
<organism>
    <name type="scientific">Staphylococcus aureus (strain MW2)</name>
    <dbReference type="NCBI Taxonomy" id="196620"/>
    <lineage>
        <taxon>Bacteria</taxon>
        <taxon>Bacillati</taxon>
        <taxon>Bacillota</taxon>
        <taxon>Bacilli</taxon>
        <taxon>Bacillales</taxon>
        <taxon>Staphylococcaceae</taxon>
        <taxon>Staphylococcus</taxon>
    </lineage>
</organism>
<dbReference type="EC" id="7.1.2.2" evidence="1"/>
<dbReference type="EMBL" id="BA000033">
    <property type="protein sequence ID" value="BAB95892.1"/>
    <property type="molecule type" value="Genomic_DNA"/>
</dbReference>
<dbReference type="RefSeq" id="WP_000511135.1">
    <property type="nucleotide sequence ID" value="NC_003923.1"/>
</dbReference>
<dbReference type="SMR" id="P63680"/>
<dbReference type="GeneID" id="98346410"/>
<dbReference type="KEGG" id="sam:MW2027"/>
<dbReference type="HOGENOM" id="CLU_022398_0_2_9"/>
<dbReference type="GO" id="GO:0005886">
    <property type="term" value="C:plasma membrane"/>
    <property type="evidence" value="ECO:0007669"/>
    <property type="project" value="UniProtKB-SubCell"/>
</dbReference>
<dbReference type="GO" id="GO:0045259">
    <property type="term" value="C:proton-transporting ATP synthase complex"/>
    <property type="evidence" value="ECO:0007669"/>
    <property type="project" value="UniProtKB-KW"/>
</dbReference>
<dbReference type="GO" id="GO:0005524">
    <property type="term" value="F:ATP binding"/>
    <property type="evidence" value="ECO:0007669"/>
    <property type="project" value="UniProtKB-UniRule"/>
</dbReference>
<dbReference type="GO" id="GO:0016887">
    <property type="term" value="F:ATP hydrolysis activity"/>
    <property type="evidence" value="ECO:0007669"/>
    <property type="project" value="InterPro"/>
</dbReference>
<dbReference type="GO" id="GO:0046933">
    <property type="term" value="F:proton-transporting ATP synthase activity, rotational mechanism"/>
    <property type="evidence" value="ECO:0007669"/>
    <property type="project" value="UniProtKB-UniRule"/>
</dbReference>
<dbReference type="CDD" id="cd18110">
    <property type="entry name" value="ATP-synt_F1_beta_C"/>
    <property type="match status" value="1"/>
</dbReference>
<dbReference type="CDD" id="cd18115">
    <property type="entry name" value="ATP-synt_F1_beta_N"/>
    <property type="match status" value="1"/>
</dbReference>
<dbReference type="CDD" id="cd01133">
    <property type="entry name" value="F1-ATPase_beta_CD"/>
    <property type="match status" value="1"/>
</dbReference>
<dbReference type="FunFam" id="1.10.1140.10:FF:000001">
    <property type="entry name" value="ATP synthase subunit beta"/>
    <property type="match status" value="1"/>
</dbReference>
<dbReference type="FunFam" id="2.40.10.170:FF:000005">
    <property type="entry name" value="ATP synthase subunit beta"/>
    <property type="match status" value="1"/>
</dbReference>
<dbReference type="FunFam" id="3.40.50.300:FF:000004">
    <property type="entry name" value="ATP synthase subunit beta"/>
    <property type="match status" value="1"/>
</dbReference>
<dbReference type="Gene3D" id="2.40.10.170">
    <property type="match status" value="1"/>
</dbReference>
<dbReference type="Gene3D" id="1.10.1140.10">
    <property type="entry name" value="Bovine Mitochondrial F1-atpase, Atp Synthase Beta Chain, Chain D, domain 3"/>
    <property type="match status" value="1"/>
</dbReference>
<dbReference type="Gene3D" id="3.40.50.300">
    <property type="entry name" value="P-loop containing nucleotide triphosphate hydrolases"/>
    <property type="match status" value="1"/>
</dbReference>
<dbReference type="HAMAP" id="MF_01347">
    <property type="entry name" value="ATP_synth_beta_bact"/>
    <property type="match status" value="1"/>
</dbReference>
<dbReference type="InterPro" id="IPR003593">
    <property type="entry name" value="AAA+_ATPase"/>
</dbReference>
<dbReference type="InterPro" id="IPR055190">
    <property type="entry name" value="ATP-synt_VA_C"/>
</dbReference>
<dbReference type="InterPro" id="IPR005722">
    <property type="entry name" value="ATP_synth_F1_bsu"/>
</dbReference>
<dbReference type="InterPro" id="IPR020003">
    <property type="entry name" value="ATPase_a/bsu_AS"/>
</dbReference>
<dbReference type="InterPro" id="IPR050053">
    <property type="entry name" value="ATPase_alpha/beta_chains"/>
</dbReference>
<dbReference type="InterPro" id="IPR004100">
    <property type="entry name" value="ATPase_F1/V1/A1_a/bsu_N"/>
</dbReference>
<dbReference type="InterPro" id="IPR036121">
    <property type="entry name" value="ATPase_F1/V1/A1_a/bsu_N_sf"/>
</dbReference>
<dbReference type="InterPro" id="IPR000194">
    <property type="entry name" value="ATPase_F1/V1/A1_a/bsu_nucl-bd"/>
</dbReference>
<dbReference type="InterPro" id="IPR024034">
    <property type="entry name" value="ATPase_F1/V1_b/a_C"/>
</dbReference>
<dbReference type="InterPro" id="IPR027417">
    <property type="entry name" value="P-loop_NTPase"/>
</dbReference>
<dbReference type="NCBIfam" id="TIGR01039">
    <property type="entry name" value="atpD"/>
    <property type="match status" value="1"/>
</dbReference>
<dbReference type="PANTHER" id="PTHR15184">
    <property type="entry name" value="ATP SYNTHASE"/>
    <property type="match status" value="1"/>
</dbReference>
<dbReference type="PANTHER" id="PTHR15184:SF71">
    <property type="entry name" value="ATP SYNTHASE SUBUNIT BETA, MITOCHONDRIAL"/>
    <property type="match status" value="1"/>
</dbReference>
<dbReference type="Pfam" id="PF00006">
    <property type="entry name" value="ATP-synt_ab"/>
    <property type="match status" value="1"/>
</dbReference>
<dbReference type="Pfam" id="PF02874">
    <property type="entry name" value="ATP-synt_ab_N"/>
    <property type="match status" value="1"/>
</dbReference>
<dbReference type="Pfam" id="PF22919">
    <property type="entry name" value="ATP-synt_VA_C"/>
    <property type="match status" value="1"/>
</dbReference>
<dbReference type="SMART" id="SM00382">
    <property type="entry name" value="AAA"/>
    <property type="match status" value="1"/>
</dbReference>
<dbReference type="SUPFAM" id="SSF47917">
    <property type="entry name" value="C-terminal domain of alpha and beta subunits of F1 ATP synthase"/>
    <property type="match status" value="1"/>
</dbReference>
<dbReference type="SUPFAM" id="SSF50615">
    <property type="entry name" value="N-terminal domain of alpha and beta subunits of F1 ATP synthase"/>
    <property type="match status" value="1"/>
</dbReference>
<dbReference type="SUPFAM" id="SSF52540">
    <property type="entry name" value="P-loop containing nucleoside triphosphate hydrolases"/>
    <property type="match status" value="1"/>
</dbReference>
<dbReference type="PROSITE" id="PS00152">
    <property type="entry name" value="ATPASE_ALPHA_BETA"/>
    <property type="match status" value="1"/>
</dbReference>
<evidence type="ECO:0000255" key="1">
    <source>
        <dbReference type="HAMAP-Rule" id="MF_01347"/>
    </source>
</evidence>
<sequence>MGIGRVTQVMGPVIDVRFEHNEVPKINNALVIDVPKEEGTIQLTLEVALQLGDDVVRTIAMDSTDGVQRGMDVKDTGKEISVPVGDETLGRVFNVLGETIDLKEEISDSVRRDPIHRQAPAFDELSTEVQILETGIKVVDLLAPYIKGGKIGLFGGAGVGKTVLIQELINNIAQEHGGISVFAGVGERTREGNDLYFEMSDSGVIKKTAMVFGQMNEPPGARMRVALSGLTMAEYFRDEQGQDVLLFIDNIFRFTQAGSEVSALLGRMPSAVGYQPTLATEMGQLQERITSTTKGSVTSIQAVFVPADDYTDPAPATAFAHLDATTNLERKLTEMGIYPAVDPLASTSRALEPSIVGQEHYEVARDVQSTLQKYRELQDIIAILGMDELSDEDKQTVERARRIQFFLSQNFHVAEQFTGQKGSYVPVKTTVANFKDILDGKYDHIPEDAFRLVGSMDDVIAKAKDMGVEV</sequence>